<comment type="function">
    <text evidence="1">IGPS catalyzes the conversion of PRFAR and glutamine to IGP, AICAR and glutamate. The HisF subunit catalyzes the cyclization activity that produces IGP and AICAR from PRFAR using the ammonia provided by the HisH subunit.</text>
</comment>
<comment type="catalytic activity">
    <reaction evidence="1">
        <text>5-[(5-phospho-1-deoxy-D-ribulos-1-ylimino)methylamino]-1-(5-phospho-beta-D-ribosyl)imidazole-4-carboxamide + L-glutamine = D-erythro-1-(imidazol-4-yl)glycerol 3-phosphate + 5-amino-1-(5-phospho-beta-D-ribosyl)imidazole-4-carboxamide + L-glutamate + H(+)</text>
        <dbReference type="Rhea" id="RHEA:24793"/>
        <dbReference type="ChEBI" id="CHEBI:15378"/>
        <dbReference type="ChEBI" id="CHEBI:29985"/>
        <dbReference type="ChEBI" id="CHEBI:58278"/>
        <dbReference type="ChEBI" id="CHEBI:58359"/>
        <dbReference type="ChEBI" id="CHEBI:58475"/>
        <dbReference type="ChEBI" id="CHEBI:58525"/>
        <dbReference type="EC" id="4.3.2.10"/>
    </reaction>
</comment>
<comment type="pathway">
    <text evidence="1">Amino-acid biosynthesis; L-histidine biosynthesis; L-histidine from 5-phospho-alpha-D-ribose 1-diphosphate: step 5/9.</text>
</comment>
<comment type="subunit">
    <text evidence="1">Heterodimer of HisH and HisF.</text>
</comment>
<comment type="subcellular location">
    <subcellularLocation>
        <location evidence="1">Cytoplasm</location>
    </subcellularLocation>
</comment>
<comment type="similarity">
    <text evidence="1">Belongs to the HisA/HisF family.</text>
</comment>
<protein>
    <recommendedName>
        <fullName evidence="1">Imidazole glycerol phosphate synthase subunit HisF</fullName>
        <ecNumber evidence="1">4.3.2.10</ecNumber>
    </recommendedName>
    <alternativeName>
        <fullName evidence="1">IGP synthase cyclase subunit</fullName>
    </alternativeName>
    <alternativeName>
        <fullName evidence="1">IGP synthase subunit HisF</fullName>
    </alternativeName>
    <alternativeName>
        <fullName evidence="1">ImGP synthase subunit HisF</fullName>
        <shortName evidence="1">IGPS subunit HisF</shortName>
    </alternativeName>
</protein>
<accession>A5CXY8</accession>
<sequence length="255" mass="27224">MSLAIRIIPCLDVCDGRVVKGTKFIDIKDAGDPVEVAKRYDLEGADEIIFLDITASIDGRDTMIHMVEAIAEQVFIPLTVGGGIRKAADVRAILNAGADKITINSAAIFNPNLINQLSKEFGSQCIVIAIDAKKIDYNKWGIFTHGGRKYTGIDAIEWAKKMTCGDNGAGEVLLTSMDCDGVKTGFDLLLTRAVSDAVDVPVIASGGVGNLEHLSEGVLQGAADAVLAASIFHFGEYTIQQAKKAMQENGIKVRL</sequence>
<gene>
    <name evidence="1" type="primary">hisF</name>
    <name type="ordered locus">COSY_0028</name>
</gene>
<feature type="chain" id="PRO_1000063171" description="Imidazole glycerol phosphate synthase subunit HisF">
    <location>
        <begin position="1"/>
        <end position="255"/>
    </location>
</feature>
<feature type="active site" evidence="1">
    <location>
        <position position="12"/>
    </location>
</feature>
<feature type="active site" evidence="1">
    <location>
        <position position="131"/>
    </location>
</feature>
<proteinExistence type="inferred from homology"/>
<dbReference type="EC" id="4.3.2.10" evidence="1"/>
<dbReference type="EMBL" id="AP009247">
    <property type="protein sequence ID" value="BAF61167.1"/>
    <property type="molecule type" value="Genomic_DNA"/>
</dbReference>
<dbReference type="RefSeq" id="WP_011929437.1">
    <property type="nucleotide sequence ID" value="NC_009465.1"/>
</dbReference>
<dbReference type="SMR" id="A5CXY8"/>
<dbReference type="STRING" id="412965.COSY_0028"/>
<dbReference type="KEGG" id="vok:COSY_0028"/>
<dbReference type="eggNOG" id="COG0107">
    <property type="taxonomic scope" value="Bacteria"/>
</dbReference>
<dbReference type="HOGENOM" id="CLU_048577_4_0_6"/>
<dbReference type="OrthoDB" id="9781903at2"/>
<dbReference type="UniPathway" id="UPA00031">
    <property type="reaction ID" value="UER00010"/>
</dbReference>
<dbReference type="Proteomes" id="UP000000247">
    <property type="component" value="Chromosome"/>
</dbReference>
<dbReference type="GO" id="GO:0005737">
    <property type="term" value="C:cytoplasm"/>
    <property type="evidence" value="ECO:0007669"/>
    <property type="project" value="UniProtKB-SubCell"/>
</dbReference>
<dbReference type="GO" id="GO:0000107">
    <property type="term" value="F:imidazoleglycerol-phosphate synthase activity"/>
    <property type="evidence" value="ECO:0007669"/>
    <property type="project" value="UniProtKB-UniRule"/>
</dbReference>
<dbReference type="GO" id="GO:0016829">
    <property type="term" value="F:lyase activity"/>
    <property type="evidence" value="ECO:0007669"/>
    <property type="project" value="UniProtKB-KW"/>
</dbReference>
<dbReference type="GO" id="GO:0000105">
    <property type="term" value="P:L-histidine biosynthetic process"/>
    <property type="evidence" value="ECO:0007669"/>
    <property type="project" value="UniProtKB-UniRule"/>
</dbReference>
<dbReference type="CDD" id="cd04731">
    <property type="entry name" value="HisF"/>
    <property type="match status" value="1"/>
</dbReference>
<dbReference type="FunFam" id="3.20.20.70:FF:000006">
    <property type="entry name" value="Imidazole glycerol phosphate synthase subunit HisF"/>
    <property type="match status" value="1"/>
</dbReference>
<dbReference type="Gene3D" id="3.20.20.70">
    <property type="entry name" value="Aldolase class I"/>
    <property type="match status" value="1"/>
</dbReference>
<dbReference type="HAMAP" id="MF_01013">
    <property type="entry name" value="HisF"/>
    <property type="match status" value="1"/>
</dbReference>
<dbReference type="InterPro" id="IPR013785">
    <property type="entry name" value="Aldolase_TIM"/>
</dbReference>
<dbReference type="InterPro" id="IPR006062">
    <property type="entry name" value="His_biosynth"/>
</dbReference>
<dbReference type="InterPro" id="IPR004651">
    <property type="entry name" value="HisF"/>
</dbReference>
<dbReference type="InterPro" id="IPR050064">
    <property type="entry name" value="IGPS_HisA/HisF"/>
</dbReference>
<dbReference type="InterPro" id="IPR011060">
    <property type="entry name" value="RibuloseP-bd_barrel"/>
</dbReference>
<dbReference type="NCBIfam" id="TIGR00735">
    <property type="entry name" value="hisF"/>
    <property type="match status" value="1"/>
</dbReference>
<dbReference type="PANTHER" id="PTHR21235:SF2">
    <property type="entry name" value="IMIDAZOLE GLYCEROL PHOSPHATE SYNTHASE HISHF"/>
    <property type="match status" value="1"/>
</dbReference>
<dbReference type="PANTHER" id="PTHR21235">
    <property type="entry name" value="IMIDAZOLE GLYCEROL PHOSPHATE SYNTHASE SUBUNIT HISF/H IGP SYNTHASE SUBUNIT HISF/H"/>
    <property type="match status" value="1"/>
</dbReference>
<dbReference type="Pfam" id="PF00977">
    <property type="entry name" value="His_biosynth"/>
    <property type="match status" value="1"/>
</dbReference>
<dbReference type="SUPFAM" id="SSF51366">
    <property type="entry name" value="Ribulose-phoshate binding barrel"/>
    <property type="match status" value="1"/>
</dbReference>
<name>HIS6_VESOH</name>
<keyword id="KW-0028">Amino-acid biosynthesis</keyword>
<keyword id="KW-0963">Cytoplasm</keyword>
<keyword id="KW-0368">Histidine biosynthesis</keyword>
<keyword id="KW-0456">Lyase</keyword>
<keyword id="KW-1185">Reference proteome</keyword>
<organism>
    <name type="scientific">Vesicomyosocius okutanii subsp. Calyptogena okutanii (strain HA)</name>
    <dbReference type="NCBI Taxonomy" id="412965"/>
    <lineage>
        <taxon>Bacteria</taxon>
        <taxon>Pseudomonadati</taxon>
        <taxon>Pseudomonadota</taxon>
        <taxon>Gammaproteobacteria</taxon>
        <taxon>Candidatus Pseudothioglobaceae</taxon>
        <taxon>Candidatus Vesicomyosocius</taxon>
    </lineage>
</organism>
<reference key="1">
    <citation type="journal article" date="2007" name="Curr. Biol.">
        <title>Reduced genome of the thioautotrophic intracellular symbiont in a deep-sea clam, Calyptogena okutanii.</title>
        <authorList>
            <person name="Kuwahara H."/>
            <person name="Yoshida T."/>
            <person name="Takaki Y."/>
            <person name="Shimamura S."/>
            <person name="Nishi S."/>
            <person name="Harada M."/>
            <person name="Matsuyama K."/>
            <person name="Takishita K."/>
            <person name="Kawato M."/>
            <person name="Uematsu K."/>
            <person name="Fujiwara Y."/>
            <person name="Sato T."/>
            <person name="Kato C."/>
            <person name="Kitagawa M."/>
            <person name="Kato I."/>
            <person name="Maruyama T."/>
        </authorList>
    </citation>
    <scope>NUCLEOTIDE SEQUENCE [LARGE SCALE GENOMIC DNA]</scope>
    <source>
        <strain>HA</strain>
    </source>
</reference>
<evidence type="ECO:0000255" key="1">
    <source>
        <dbReference type="HAMAP-Rule" id="MF_01013"/>
    </source>
</evidence>